<keyword id="KW-0963">Cytoplasm</keyword>
<keyword id="KW-0489">Methyltransferase</keyword>
<keyword id="KW-0698">rRNA processing</keyword>
<keyword id="KW-0949">S-adenosyl-L-methionine</keyword>
<keyword id="KW-0808">Transferase</keyword>
<accession>Q2NUV2</accession>
<evidence type="ECO:0000255" key="1">
    <source>
        <dbReference type="HAMAP-Rule" id="MF_00658"/>
    </source>
</evidence>
<reference key="1">
    <citation type="journal article" date="2006" name="Genome Res.">
        <title>Massive genome erosion and functional adaptations provide insights into the symbiotic lifestyle of Sodalis glossinidius in the tsetse host.</title>
        <authorList>
            <person name="Toh H."/>
            <person name="Weiss B.L."/>
            <person name="Perkin S.A.H."/>
            <person name="Yamashita A."/>
            <person name="Oshima K."/>
            <person name="Hattori M."/>
            <person name="Aksoy S."/>
        </authorList>
    </citation>
    <scope>NUCLEOTIDE SEQUENCE [LARGE SCALE GENOMIC DNA]</scope>
    <source>
        <strain>morsitans</strain>
    </source>
</reference>
<dbReference type="EC" id="2.1.1.177" evidence="1"/>
<dbReference type="EMBL" id="AP008232">
    <property type="protein sequence ID" value="BAE74073.1"/>
    <property type="molecule type" value="Genomic_DNA"/>
</dbReference>
<dbReference type="RefSeq" id="WP_011410661.1">
    <property type="nucleotide sequence ID" value="NC_007712.1"/>
</dbReference>
<dbReference type="SMR" id="Q2NUV2"/>
<dbReference type="STRING" id="343509.SG0798"/>
<dbReference type="KEGG" id="sgl:SG0798"/>
<dbReference type="eggNOG" id="COG1576">
    <property type="taxonomic scope" value="Bacteria"/>
</dbReference>
<dbReference type="HOGENOM" id="CLU_100552_1_0_6"/>
<dbReference type="OrthoDB" id="9806643at2"/>
<dbReference type="BioCyc" id="SGLO343509:SGP1_RS07040-MONOMER"/>
<dbReference type="Proteomes" id="UP000001932">
    <property type="component" value="Chromosome"/>
</dbReference>
<dbReference type="GO" id="GO:0005737">
    <property type="term" value="C:cytoplasm"/>
    <property type="evidence" value="ECO:0007669"/>
    <property type="project" value="UniProtKB-SubCell"/>
</dbReference>
<dbReference type="GO" id="GO:0070038">
    <property type="term" value="F:rRNA (pseudouridine-N3-)-methyltransferase activity"/>
    <property type="evidence" value="ECO:0007669"/>
    <property type="project" value="UniProtKB-UniRule"/>
</dbReference>
<dbReference type="CDD" id="cd18081">
    <property type="entry name" value="RlmH-like"/>
    <property type="match status" value="1"/>
</dbReference>
<dbReference type="Gene3D" id="3.40.1280.10">
    <property type="match status" value="1"/>
</dbReference>
<dbReference type="HAMAP" id="MF_00658">
    <property type="entry name" value="23SrRNA_methyltr_H"/>
    <property type="match status" value="1"/>
</dbReference>
<dbReference type="InterPro" id="IPR029028">
    <property type="entry name" value="Alpha/beta_knot_MTases"/>
</dbReference>
<dbReference type="InterPro" id="IPR003742">
    <property type="entry name" value="RlmH-like"/>
</dbReference>
<dbReference type="InterPro" id="IPR029026">
    <property type="entry name" value="tRNA_m1G_MTases_N"/>
</dbReference>
<dbReference type="NCBIfam" id="NF000984">
    <property type="entry name" value="PRK00103.1-1"/>
    <property type="match status" value="1"/>
</dbReference>
<dbReference type="NCBIfam" id="NF000986">
    <property type="entry name" value="PRK00103.1-4"/>
    <property type="match status" value="1"/>
</dbReference>
<dbReference type="NCBIfam" id="TIGR00246">
    <property type="entry name" value="tRNA_RlmH_YbeA"/>
    <property type="match status" value="1"/>
</dbReference>
<dbReference type="PANTHER" id="PTHR33603">
    <property type="entry name" value="METHYLTRANSFERASE"/>
    <property type="match status" value="1"/>
</dbReference>
<dbReference type="PANTHER" id="PTHR33603:SF1">
    <property type="entry name" value="RIBOSOMAL RNA LARGE SUBUNIT METHYLTRANSFERASE H"/>
    <property type="match status" value="1"/>
</dbReference>
<dbReference type="Pfam" id="PF02590">
    <property type="entry name" value="SPOUT_MTase"/>
    <property type="match status" value="1"/>
</dbReference>
<dbReference type="PIRSF" id="PIRSF004505">
    <property type="entry name" value="MT_bac"/>
    <property type="match status" value="1"/>
</dbReference>
<dbReference type="SUPFAM" id="SSF75217">
    <property type="entry name" value="alpha/beta knot"/>
    <property type="match status" value="1"/>
</dbReference>
<feature type="chain" id="PRO_0000260612" description="Ribosomal RNA large subunit methyltransferase H">
    <location>
        <begin position="1"/>
        <end position="156"/>
    </location>
</feature>
<feature type="binding site" evidence="1">
    <location>
        <position position="73"/>
    </location>
    <ligand>
        <name>S-adenosyl-L-methionine</name>
        <dbReference type="ChEBI" id="CHEBI:59789"/>
    </ligand>
</feature>
<feature type="binding site" evidence="1">
    <location>
        <position position="104"/>
    </location>
    <ligand>
        <name>S-adenosyl-L-methionine</name>
        <dbReference type="ChEBI" id="CHEBI:59789"/>
    </ligand>
</feature>
<feature type="binding site" evidence="1">
    <location>
        <begin position="123"/>
        <end position="128"/>
    </location>
    <ligand>
        <name>S-adenosyl-L-methionine</name>
        <dbReference type="ChEBI" id="CHEBI:59789"/>
    </ligand>
</feature>
<name>RLMH_SODGM</name>
<comment type="function">
    <text evidence="1">Specifically methylates the pseudouridine at position 1915 (m3Psi1915) in 23S rRNA.</text>
</comment>
<comment type="catalytic activity">
    <reaction evidence="1">
        <text>pseudouridine(1915) in 23S rRNA + S-adenosyl-L-methionine = N(3)-methylpseudouridine(1915) in 23S rRNA + S-adenosyl-L-homocysteine + H(+)</text>
        <dbReference type="Rhea" id="RHEA:42752"/>
        <dbReference type="Rhea" id="RHEA-COMP:10221"/>
        <dbReference type="Rhea" id="RHEA-COMP:10222"/>
        <dbReference type="ChEBI" id="CHEBI:15378"/>
        <dbReference type="ChEBI" id="CHEBI:57856"/>
        <dbReference type="ChEBI" id="CHEBI:59789"/>
        <dbReference type="ChEBI" id="CHEBI:65314"/>
        <dbReference type="ChEBI" id="CHEBI:74486"/>
        <dbReference type="EC" id="2.1.1.177"/>
    </reaction>
</comment>
<comment type="subunit">
    <text evidence="1">Homodimer.</text>
</comment>
<comment type="subcellular location">
    <subcellularLocation>
        <location evidence="1">Cytoplasm</location>
    </subcellularLocation>
</comment>
<comment type="similarity">
    <text evidence="1">Belongs to the RNA methyltransferase RlmH family.</text>
</comment>
<sequence>MRLQLIAIGTKMPDWVQTGFSDYLKRFPKDLPFDLTEIAAGKRGKNADIARILDKEGEQMLAAVAKGNRIVTLDIPGARWETPRLAQQLERWKQDGRDVSFLIGGPEGLAPACKAGAEQSWSLSPLTLPHPLVRVLVAESLYRAWSITTNHPYHRE</sequence>
<organism>
    <name type="scientific">Sodalis glossinidius (strain morsitans)</name>
    <dbReference type="NCBI Taxonomy" id="343509"/>
    <lineage>
        <taxon>Bacteria</taxon>
        <taxon>Pseudomonadati</taxon>
        <taxon>Pseudomonadota</taxon>
        <taxon>Gammaproteobacteria</taxon>
        <taxon>Enterobacterales</taxon>
        <taxon>Bruguierivoracaceae</taxon>
        <taxon>Sodalis</taxon>
    </lineage>
</organism>
<proteinExistence type="inferred from homology"/>
<protein>
    <recommendedName>
        <fullName evidence="1">Ribosomal RNA large subunit methyltransferase H</fullName>
        <ecNumber evidence="1">2.1.1.177</ecNumber>
    </recommendedName>
    <alternativeName>
        <fullName evidence="1">23S rRNA (pseudouridine1915-N3)-methyltransferase</fullName>
    </alternativeName>
    <alternativeName>
        <fullName evidence="1">23S rRNA m3Psi1915 methyltransferase</fullName>
    </alternativeName>
    <alternativeName>
        <fullName evidence="1">rRNA (pseudouridine-N3-)-methyltransferase RlmH</fullName>
    </alternativeName>
</protein>
<gene>
    <name evidence="1" type="primary">rlmH</name>
    <name type="ordered locus">SG0798</name>
</gene>